<name>NUOD_XANCB</name>
<accession>B0RRA1</accession>
<feature type="chain" id="PRO_0000371951" description="NADH-quinone oxidoreductase subunit D">
    <location>
        <begin position="1"/>
        <end position="435"/>
    </location>
</feature>
<organism>
    <name type="scientific">Xanthomonas campestris pv. campestris (strain B100)</name>
    <dbReference type="NCBI Taxonomy" id="509169"/>
    <lineage>
        <taxon>Bacteria</taxon>
        <taxon>Pseudomonadati</taxon>
        <taxon>Pseudomonadota</taxon>
        <taxon>Gammaproteobacteria</taxon>
        <taxon>Lysobacterales</taxon>
        <taxon>Lysobacteraceae</taxon>
        <taxon>Xanthomonas</taxon>
    </lineage>
</organism>
<protein>
    <recommendedName>
        <fullName evidence="1">NADH-quinone oxidoreductase subunit D</fullName>
        <ecNumber evidence="1">7.1.1.-</ecNumber>
    </recommendedName>
    <alternativeName>
        <fullName evidence="1">NADH dehydrogenase I subunit D</fullName>
    </alternativeName>
    <alternativeName>
        <fullName evidence="1">NDH-1 subunit D</fullName>
    </alternativeName>
</protein>
<gene>
    <name evidence="1" type="primary">nuoD</name>
    <name type="ordered locus">xcc-b100_1636</name>
</gene>
<sequence>MSEYRQATDAFASNPVESKQEIRNYTMNFGPQHPAAHGVLRLILEMDGETVVRADPHIGLLHRGTEKLAESKPFNQSVPYMDRLDYVSMMCNEHAYVRAIESLMGIEAPERAQYIRTMFDEITRIKNHLMWVGSNALDLGAMAVMLYAFREREELMDVYEAVSGARMHAAYYRPGGVYRDLPDRMPKYKESRWHKGGALTKLNAAREGSMLDFLENFTDTFPSRVDEYETLLTENRIWKQRTVDVGIISPDLARAWGMTGPMLRGSGIEWDLRKKQPYAKYDAVDFDVPVGTNGDCYDRYLVRVAEMRESNRIIKQCVKWLKANPGPVMVTNFKVAPPSREGMKDDMEALIHHFKLFSEGYCVPAGETYCAVEAPKGEFGCYLMSDGANKPFRVHLRAPGFAHLSSMDAVVRGYLLADVVAMIGTYDLVFGEVDR</sequence>
<proteinExistence type="inferred from homology"/>
<keyword id="KW-0997">Cell inner membrane</keyword>
<keyword id="KW-1003">Cell membrane</keyword>
<keyword id="KW-0472">Membrane</keyword>
<keyword id="KW-0520">NAD</keyword>
<keyword id="KW-0874">Quinone</keyword>
<keyword id="KW-1278">Translocase</keyword>
<keyword id="KW-0813">Transport</keyword>
<keyword id="KW-0830">Ubiquinone</keyword>
<reference key="1">
    <citation type="journal article" date="2008" name="J. Biotechnol.">
        <title>The genome of Xanthomonas campestris pv. campestris B100 and its use for the reconstruction of metabolic pathways involved in xanthan biosynthesis.</title>
        <authorList>
            <person name="Vorhoelter F.-J."/>
            <person name="Schneiker S."/>
            <person name="Goesmann A."/>
            <person name="Krause L."/>
            <person name="Bekel T."/>
            <person name="Kaiser O."/>
            <person name="Linke B."/>
            <person name="Patschkowski T."/>
            <person name="Rueckert C."/>
            <person name="Schmid J."/>
            <person name="Sidhu V.K."/>
            <person name="Sieber V."/>
            <person name="Tauch A."/>
            <person name="Watt S.A."/>
            <person name="Weisshaar B."/>
            <person name="Becker A."/>
            <person name="Niehaus K."/>
            <person name="Puehler A."/>
        </authorList>
    </citation>
    <scope>NUCLEOTIDE SEQUENCE [LARGE SCALE GENOMIC DNA]</scope>
    <source>
        <strain>B100</strain>
    </source>
</reference>
<comment type="function">
    <text evidence="1">NDH-1 shuttles electrons from NADH, via FMN and iron-sulfur (Fe-S) centers, to quinones in the respiratory chain. The immediate electron acceptor for the enzyme in this species is believed to be ubiquinone. Couples the redox reaction to proton translocation (for every two electrons transferred, four hydrogen ions are translocated across the cytoplasmic membrane), and thus conserves the redox energy in a proton gradient.</text>
</comment>
<comment type="catalytic activity">
    <reaction evidence="1">
        <text>a quinone + NADH + 5 H(+)(in) = a quinol + NAD(+) + 4 H(+)(out)</text>
        <dbReference type="Rhea" id="RHEA:57888"/>
        <dbReference type="ChEBI" id="CHEBI:15378"/>
        <dbReference type="ChEBI" id="CHEBI:24646"/>
        <dbReference type="ChEBI" id="CHEBI:57540"/>
        <dbReference type="ChEBI" id="CHEBI:57945"/>
        <dbReference type="ChEBI" id="CHEBI:132124"/>
    </reaction>
</comment>
<comment type="subunit">
    <text evidence="1">NDH-1 is composed of 14 different subunits. Subunits NuoB, C, D, E, F, and G constitute the peripheral sector of the complex.</text>
</comment>
<comment type="subcellular location">
    <subcellularLocation>
        <location evidence="1">Cell inner membrane</location>
        <topology evidence="1">Peripheral membrane protein</topology>
        <orientation evidence="1">Cytoplasmic side</orientation>
    </subcellularLocation>
</comment>
<comment type="similarity">
    <text evidence="1">Belongs to the complex I 49 kDa subunit family.</text>
</comment>
<evidence type="ECO:0000255" key="1">
    <source>
        <dbReference type="HAMAP-Rule" id="MF_01358"/>
    </source>
</evidence>
<dbReference type="EC" id="7.1.1.-" evidence="1"/>
<dbReference type="EMBL" id="AM920689">
    <property type="protein sequence ID" value="CAP50986.1"/>
    <property type="molecule type" value="Genomic_DNA"/>
</dbReference>
<dbReference type="SMR" id="B0RRA1"/>
<dbReference type="KEGG" id="xca:xcc-b100_1636"/>
<dbReference type="HOGENOM" id="CLU_015134_1_1_6"/>
<dbReference type="Proteomes" id="UP000001188">
    <property type="component" value="Chromosome"/>
</dbReference>
<dbReference type="GO" id="GO:0005886">
    <property type="term" value="C:plasma membrane"/>
    <property type="evidence" value="ECO:0007669"/>
    <property type="project" value="UniProtKB-SubCell"/>
</dbReference>
<dbReference type="GO" id="GO:0051287">
    <property type="term" value="F:NAD binding"/>
    <property type="evidence" value="ECO:0007669"/>
    <property type="project" value="InterPro"/>
</dbReference>
<dbReference type="GO" id="GO:0050136">
    <property type="term" value="F:NADH:ubiquinone reductase (non-electrogenic) activity"/>
    <property type="evidence" value="ECO:0007669"/>
    <property type="project" value="UniProtKB-UniRule"/>
</dbReference>
<dbReference type="GO" id="GO:0048038">
    <property type="term" value="F:quinone binding"/>
    <property type="evidence" value="ECO:0007669"/>
    <property type="project" value="UniProtKB-KW"/>
</dbReference>
<dbReference type="FunFam" id="1.10.645.10:FF:000005">
    <property type="entry name" value="NADH-quinone oxidoreductase subunit D"/>
    <property type="match status" value="1"/>
</dbReference>
<dbReference type="Gene3D" id="1.10.645.10">
    <property type="entry name" value="Cytochrome-c3 Hydrogenase, chain B"/>
    <property type="match status" value="1"/>
</dbReference>
<dbReference type="HAMAP" id="MF_01358">
    <property type="entry name" value="NDH1_NuoD"/>
    <property type="match status" value="1"/>
</dbReference>
<dbReference type="InterPro" id="IPR001135">
    <property type="entry name" value="NADH_Q_OxRdtase_suD"/>
</dbReference>
<dbReference type="InterPro" id="IPR014029">
    <property type="entry name" value="NADH_UbQ_OxRdtase_49kDa_CS"/>
</dbReference>
<dbReference type="InterPro" id="IPR022885">
    <property type="entry name" value="NDH1_su_D/H"/>
</dbReference>
<dbReference type="InterPro" id="IPR029014">
    <property type="entry name" value="NiFe-Hase_large"/>
</dbReference>
<dbReference type="NCBIfam" id="TIGR01962">
    <property type="entry name" value="NuoD"/>
    <property type="match status" value="1"/>
</dbReference>
<dbReference type="NCBIfam" id="NF004739">
    <property type="entry name" value="PRK06075.1"/>
    <property type="match status" value="1"/>
</dbReference>
<dbReference type="PANTHER" id="PTHR11993:SF10">
    <property type="entry name" value="NADH DEHYDROGENASE [UBIQUINONE] IRON-SULFUR PROTEIN 2, MITOCHONDRIAL"/>
    <property type="match status" value="1"/>
</dbReference>
<dbReference type="PANTHER" id="PTHR11993">
    <property type="entry name" value="NADH-UBIQUINONE OXIDOREDUCTASE 49 KDA SUBUNIT"/>
    <property type="match status" value="1"/>
</dbReference>
<dbReference type="Pfam" id="PF00346">
    <property type="entry name" value="Complex1_49kDa"/>
    <property type="match status" value="1"/>
</dbReference>
<dbReference type="SUPFAM" id="SSF56762">
    <property type="entry name" value="HydB/Nqo4-like"/>
    <property type="match status" value="1"/>
</dbReference>
<dbReference type="PROSITE" id="PS00535">
    <property type="entry name" value="COMPLEX1_49K"/>
    <property type="match status" value="1"/>
</dbReference>